<organism>
    <name type="scientific">Salmonella paratyphi B (strain ATCC BAA-1250 / SPB7)</name>
    <dbReference type="NCBI Taxonomy" id="1016998"/>
    <lineage>
        <taxon>Bacteria</taxon>
        <taxon>Pseudomonadati</taxon>
        <taxon>Pseudomonadota</taxon>
        <taxon>Gammaproteobacteria</taxon>
        <taxon>Enterobacterales</taxon>
        <taxon>Enterobacteriaceae</taxon>
        <taxon>Salmonella</taxon>
    </lineage>
</organism>
<evidence type="ECO:0000255" key="1">
    <source>
        <dbReference type="HAMAP-Rule" id="MF_00137"/>
    </source>
</evidence>
<comment type="catalytic activity">
    <reaction evidence="1">
        <text>5-amino-1-(5-phospho-D-ribosyl)imidazole-4-carboxylate + L-aspartate + ATP = (2S)-2-[5-amino-1-(5-phospho-beta-D-ribosyl)imidazole-4-carboxamido]succinate + ADP + phosphate + 2 H(+)</text>
        <dbReference type="Rhea" id="RHEA:22628"/>
        <dbReference type="ChEBI" id="CHEBI:15378"/>
        <dbReference type="ChEBI" id="CHEBI:29991"/>
        <dbReference type="ChEBI" id="CHEBI:30616"/>
        <dbReference type="ChEBI" id="CHEBI:43474"/>
        <dbReference type="ChEBI" id="CHEBI:58443"/>
        <dbReference type="ChEBI" id="CHEBI:77657"/>
        <dbReference type="ChEBI" id="CHEBI:456216"/>
        <dbReference type="EC" id="6.3.2.6"/>
    </reaction>
</comment>
<comment type="pathway">
    <text evidence="1">Purine metabolism; IMP biosynthesis via de novo pathway; 5-amino-1-(5-phospho-D-ribosyl)imidazole-4-carboxamide from 5-amino-1-(5-phospho-D-ribosyl)imidazole-4-carboxylate: step 1/2.</text>
</comment>
<comment type="similarity">
    <text evidence="1">Belongs to the SAICAR synthetase family.</text>
</comment>
<protein>
    <recommendedName>
        <fullName evidence="1">Phosphoribosylaminoimidazole-succinocarboxamide synthase</fullName>
        <ecNumber evidence="1">6.3.2.6</ecNumber>
    </recommendedName>
    <alternativeName>
        <fullName evidence="1">SAICAR synthetase</fullName>
    </alternativeName>
</protein>
<accession>A9N2Z5</accession>
<proteinExistence type="inferred from homology"/>
<reference key="1">
    <citation type="submission" date="2007-11" db="EMBL/GenBank/DDBJ databases">
        <authorList>
            <consortium name="The Salmonella enterica serovar Paratyphi B Genome Sequencing Project"/>
            <person name="McClelland M."/>
            <person name="Sanderson E.K."/>
            <person name="Porwollik S."/>
            <person name="Spieth J."/>
            <person name="Clifton W.S."/>
            <person name="Fulton R."/>
            <person name="Cordes M."/>
            <person name="Wollam A."/>
            <person name="Shah N."/>
            <person name="Pepin K."/>
            <person name="Bhonagiri V."/>
            <person name="Nash W."/>
            <person name="Johnson M."/>
            <person name="Thiruvilangam P."/>
            <person name="Wilson R."/>
        </authorList>
    </citation>
    <scope>NUCLEOTIDE SEQUENCE [LARGE SCALE GENOMIC DNA]</scope>
    <source>
        <strain>ATCC BAA-1250 / SPB7</strain>
    </source>
</reference>
<sequence length="237" mass="26908">MQKQAELYRGKAKTVYSTENPDLLVLEFRNDTSAGDGARIEQFDRKGMVNNKFNHFIMTKLAEAGIPTQMERLLSDTECLVKKLEMVPVECVVRNRAAGSLVKRLGVEEGMELNPPIFDLFLKNDALHDPMVNSSYCETFGWVSQENLARMKELTYKANDVLKKLFDDAGLILVDFKLEFGLYKGEVVLGDEFSPDGSRLWDKETLDKMDKDRFRQSLGGLIEAYEAVAHRLGVKLD</sequence>
<dbReference type="EC" id="6.3.2.6" evidence="1"/>
<dbReference type="EMBL" id="CP000886">
    <property type="protein sequence ID" value="ABX65895.1"/>
    <property type="molecule type" value="Genomic_DNA"/>
</dbReference>
<dbReference type="RefSeq" id="WP_001171630.1">
    <property type="nucleotide sequence ID" value="NC_010102.1"/>
</dbReference>
<dbReference type="SMR" id="A9N2Z5"/>
<dbReference type="KEGG" id="spq:SPAB_00462"/>
<dbReference type="PATRIC" id="fig|1016998.12.peg.436"/>
<dbReference type="HOGENOM" id="CLU_061495_2_1_6"/>
<dbReference type="BioCyc" id="SENT1016998:SPAB_RS01880-MONOMER"/>
<dbReference type="UniPathway" id="UPA00074">
    <property type="reaction ID" value="UER00131"/>
</dbReference>
<dbReference type="Proteomes" id="UP000008556">
    <property type="component" value="Chromosome"/>
</dbReference>
<dbReference type="GO" id="GO:0005829">
    <property type="term" value="C:cytosol"/>
    <property type="evidence" value="ECO:0007669"/>
    <property type="project" value="TreeGrafter"/>
</dbReference>
<dbReference type="GO" id="GO:0005524">
    <property type="term" value="F:ATP binding"/>
    <property type="evidence" value="ECO:0007669"/>
    <property type="project" value="UniProtKB-KW"/>
</dbReference>
<dbReference type="GO" id="GO:0004639">
    <property type="term" value="F:phosphoribosylaminoimidazolesuccinocarboxamide synthase activity"/>
    <property type="evidence" value="ECO:0007669"/>
    <property type="project" value="UniProtKB-UniRule"/>
</dbReference>
<dbReference type="GO" id="GO:0006189">
    <property type="term" value="P:'de novo' IMP biosynthetic process"/>
    <property type="evidence" value="ECO:0007669"/>
    <property type="project" value="UniProtKB-UniRule"/>
</dbReference>
<dbReference type="GO" id="GO:0009236">
    <property type="term" value="P:cobalamin biosynthetic process"/>
    <property type="evidence" value="ECO:0007669"/>
    <property type="project" value="InterPro"/>
</dbReference>
<dbReference type="CDD" id="cd01415">
    <property type="entry name" value="SAICAR_synt_PurC"/>
    <property type="match status" value="1"/>
</dbReference>
<dbReference type="FunFam" id="3.30.200.20:FF:000086">
    <property type="entry name" value="Phosphoribosylaminoimidazole-succinocarboxamide synthase"/>
    <property type="match status" value="1"/>
</dbReference>
<dbReference type="FunFam" id="3.30.470.20:FF:000006">
    <property type="entry name" value="Phosphoribosylaminoimidazole-succinocarboxamide synthase"/>
    <property type="match status" value="1"/>
</dbReference>
<dbReference type="Gene3D" id="3.30.470.20">
    <property type="entry name" value="ATP-grasp fold, B domain"/>
    <property type="match status" value="1"/>
</dbReference>
<dbReference type="Gene3D" id="3.30.200.20">
    <property type="entry name" value="Phosphorylase Kinase, domain 1"/>
    <property type="match status" value="1"/>
</dbReference>
<dbReference type="HAMAP" id="MF_00137">
    <property type="entry name" value="SAICAR_synth"/>
    <property type="match status" value="1"/>
</dbReference>
<dbReference type="InterPro" id="IPR028923">
    <property type="entry name" value="SAICAR_synt/ADE2_N"/>
</dbReference>
<dbReference type="InterPro" id="IPR033934">
    <property type="entry name" value="SAICAR_synt_PurC"/>
</dbReference>
<dbReference type="InterPro" id="IPR001636">
    <property type="entry name" value="SAICAR_synth"/>
</dbReference>
<dbReference type="InterPro" id="IPR050089">
    <property type="entry name" value="SAICAR_synthetase"/>
</dbReference>
<dbReference type="InterPro" id="IPR018236">
    <property type="entry name" value="SAICAR_synthetase_CS"/>
</dbReference>
<dbReference type="NCBIfam" id="TIGR00081">
    <property type="entry name" value="purC"/>
    <property type="match status" value="1"/>
</dbReference>
<dbReference type="PANTHER" id="PTHR43599">
    <property type="entry name" value="MULTIFUNCTIONAL PROTEIN ADE2"/>
    <property type="match status" value="1"/>
</dbReference>
<dbReference type="PANTHER" id="PTHR43599:SF3">
    <property type="entry name" value="SI:DKEY-6E2.2"/>
    <property type="match status" value="1"/>
</dbReference>
<dbReference type="Pfam" id="PF01259">
    <property type="entry name" value="SAICAR_synt"/>
    <property type="match status" value="1"/>
</dbReference>
<dbReference type="SUPFAM" id="SSF56104">
    <property type="entry name" value="SAICAR synthase-like"/>
    <property type="match status" value="1"/>
</dbReference>
<dbReference type="PROSITE" id="PS01057">
    <property type="entry name" value="SAICAR_SYNTHETASE_1"/>
    <property type="match status" value="1"/>
</dbReference>
<dbReference type="PROSITE" id="PS01058">
    <property type="entry name" value="SAICAR_SYNTHETASE_2"/>
    <property type="match status" value="1"/>
</dbReference>
<keyword id="KW-0067">ATP-binding</keyword>
<keyword id="KW-0436">Ligase</keyword>
<keyword id="KW-0547">Nucleotide-binding</keyword>
<keyword id="KW-0658">Purine biosynthesis</keyword>
<feature type="chain" id="PRO_1000076467" description="Phosphoribosylaminoimidazole-succinocarboxamide synthase">
    <location>
        <begin position="1"/>
        <end position="237"/>
    </location>
</feature>
<gene>
    <name evidence="1" type="primary">purC</name>
    <name type="ordered locus">SPAB_00462</name>
</gene>
<name>PUR7_SALPB</name>